<feature type="chain" id="PRO_0000276559" description="Photosystem II reaction center protein Psb30">
    <location>
        <begin position="1"/>
        <end position="33"/>
    </location>
</feature>
<feature type="transmembrane region" description="Helical" evidence="1">
    <location>
        <begin position="5"/>
        <end position="25"/>
    </location>
</feature>
<reference key="1">
    <citation type="journal article" date="2007" name="Mol. Biol. Evol.">
        <title>The complete chloroplast and mitochondrial DNA sequence of Ostreococcus tauri: organelle genomes of the smallest eukaryote are examples of compaction.</title>
        <authorList>
            <person name="Robbens S."/>
            <person name="Derelle E."/>
            <person name="Ferraz C."/>
            <person name="Wuyts J."/>
            <person name="Moreau H."/>
            <person name="Van de Peer Y."/>
        </authorList>
    </citation>
    <scope>NUCLEOTIDE SEQUENCE [LARGE SCALE GENOMIC DNA]</scope>
    <source>
        <strain>OTTH0595</strain>
    </source>
</reference>
<organism>
    <name type="scientific">Ostreococcus tauri</name>
    <dbReference type="NCBI Taxonomy" id="70448"/>
    <lineage>
        <taxon>Eukaryota</taxon>
        <taxon>Viridiplantae</taxon>
        <taxon>Chlorophyta</taxon>
        <taxon>Mamiellophyceae</taxon>
        <taxon>Mamiellales</taxon>
        <taxon>Bathycoccaceae</taxon>
        <taxon>Ostreococcus</taxon>
    </lineage>
</organism>
<comment type="function">
    <text evidence="1">A core subunit of photosystem II (PSII), probably helps stabilize the reaction center.</text>
</comment>
<comment type="subunit">
    <text evidence="1">PSII is composed of 1 copy each of membrane proteins PsbA, PsbB, PsbC, PsbD, PsbE, PsbF, PsbH, PsbI, PsbJ, PsbK, PsbL, PsbM, PsbT, PsbX, PsbY, PsbZ, Psb30/Ycf12, peripheral proteins of the oxygen-evolving complex and a large number of cofactors. It forms dimeric complexes.</text>
</comment>
<comment type="subcellular location">
    <subcellularLocation>
        <location evidence="1">Plastid</location>
        <location evidence="1">Chloroplast thylakoid membrane</location>
        <topology evidence="1">Single-pass membrane protein</topology>
    </subcellularLocation>
</comment>
<comment type="similarity">
    <text evidence="1">Belongs to the Psb30/Ycf12 family.</text>
</comment>
<name>PSB30_OSTTA</name>
<dbReference type="EMBL" id="CR954199">
    <property type="protein sequence ID" value="CAL36378.1"/>
    <property type="molecule type" value="Genomic_DNA"/>
</dbReference>
<dbReference type="RefSeq" id="YP_717256.1">
    <property type="nucleotide sequence ID" value="NC_008289.1"/>
</dbReference>
<dbReference type="SMR" id="Q0P3J9"/>
<dbReference type="STRING" id="70448.Q0P3J9"/>
<dbReference type="GeneID" id="4238818"/>
<dbReference type="KEGG" id="ota:OstapCp53"/>
<dbReference type="InParanoid" id="Q0P3J9"/>
<dbReference type="Proteomes" id="UP000009170">
    <property type="component" value="Chloroplast"/>
</dbReference>
<dbReference type="GO" id="GO:0009535">
    <property type="term" value="C:chloroplast thylakoid membrane"/>
    <property type="evidence" value="ECO:0007669"/>
    <property type="project" value="UniProtKB-SubCell"/>
</dbReference>
<dbReference type="GO" id="GO:0009523">
    <property type="term" value="C:photosystem II"/>
    <property type="evidence" value="ECO:0007669"/>
    <property type="project" value="UniProtKB-KW"/>
</dbReference>
<dbReference type="GO" id="GO:0015979">
    <property type="term" value="P:photosynthesis"/>
    <property type="evidence" value="ECO:0007669"/>
    <property type="project" value="UniProtKB-KW"/>
</dbReference>
<dbReference type="HAMAP" id="MF_01329">
    <property type="entry name" value="PSII_Psb30_Ycf12"/>
    <property type="match status" value="1"/>
</dbReference>
<dbReference type="InterPro" id="IPR010284">
    <property type="entry name" value="PSII_Ycf12_core-subunit"/>
</dbReference>
<dbReference type="NCBIfam" id="NF010239">
    <property type="entry name" value="PRK13686.1"/>
    <property type="match status" value="1"/>
</dbReference>
<dbReference type="Pfam" id="PF05969">
    <property type="entry name" value="PSII_Ycf12"/>
    <property type="match status" value="1"/>
</dbReference>
<gene>
    <name evidence="1" type="primary">psb30</name>
    <name evidence="1" type="synonym">ycf12</name>
    <name type="ordered locus">OtCpg00530</name>
</gene>
<sequence length="33" mass="3291">MNLELIGQLVTVALVVGAGPIIIGALFARGGNL</sequence>
<evidence type="ECO:0000255" key="1">
    <source>
        <dbReference type="HAMAP-Rule" id="MF_01329"/>
    </source>
</evidence>
<accession>Q0P3J9</accession>
<protein>
    <recommendedName>
        <fullName evidence="1">Photosystem II reaction center protein Psb30</fullName>
    </recommendedName>
    <alternativeName>
        <fullName evidence="1">Photosystem II reaction center protein Ycf12</fullName>
    </alternativeName>
</protein>
<proteinExistence type="inferred from homology"/>
<keyword id="KW-0150">Chloroplast</keyword>
<keyword id="KW-0472">Membrane</keyword>
<keyword id="KW-0602">Photosynthesis</keyword>
<keyword id="KW-0604">Photosystem II</keyword>
<keyword id="KW-0934">Plastid</keyword>
<keyword id="KW-1185">Reference proteome</keyword>
<keyword id="KW-0793">Thylakoid</keyword>
<keyword id="KW-0812">Transmembrane</keyword>
<keyword id="KW-1133">Transmembrane helix</keyword>
<geneLocation type="chloroplast"/>